<evidence type="ECO:0000250" key="1">
    <source>
        <dbReference type="UniProtKB" id="A9JLI7"/>
    </source>
</evidence>
<evidence type="ECO:0000250" key="2">
    <source>
        <dbReference type="UniProtKB" id="P18558"/>
    </source>
</evidence>
<evidence type="ECO:0000255" key="3"/>
<evidence type="ECO:0000305" key="4"/>
<organismHost>
    <name type="scientific">Ornithodoros</name>
    <name type="common">relapsing fever ticks</name>
    <dbReference type="NCBI Taxonomy" id="6937"/>
</organismHost>
<organismHost>
    <name type="scientific">Phacochoerus aethiopicus</name>
    <name type="common">Warthog</name>
    <dbReference type="NCBI Taxonomy" id="85517"/>
</organismHost>
<organismHost>
    <name type="scientific">Phacochoerus africanus</name>
    <name type="common">Warthog</name>
    <dbReference type="NCBI Taxonomy" id="41426"/>
</organismHost>
<organismHost>
    <name type="scientific">Potamochoerus larvatus</name>
    <name type="common">Bushpig</name>
    <dbReference type="NCBI Taxonomy" id="273792"/>
</organismHost>
<organismHost>
    <name type="scientific">Sus scrofa</name>
    <name type="common">Pig</name>
    <dbReference type="NCBI Taxonomy" id="9823"/>
</organismHost>
<keyword id="KW-0244">Early protein</keyword>
<keyword id="KW-0325">Glycoprotein</keyword>
<keyword id="KW-0732">Signal</keyword>
<keyword id="KW-0946">Virion</keyword>
<sequence>MLVVFFLGILGLLANQILGLPTQAGGHLRSTDNPPQEELGYWCTYMESCKFCWECAHGICKNKVNKSMPLIIENSYLTSCEVSRWYNQCTYSEGNGHYHVMDCSDPVPHNRPHQLLKKIYEKEDL</sequence>
<dbReference type="EMBL" id="AY261366">
    <property type="status" value="NOT_ANNOTATED_CDS"/>
    <property type="molecule type" value="Genomic_DNA"/>
</dbReference>
<dbReference type="Proteomes" id="UP000000858">
    <property type="component" value="Segment"/>
</dbReference>
<dbReference type="GO" id="GO:0044172">
    <property type="term" value="C:host cell endoplasmic reticulum-Golgi intermediate compartment"/>
    <property type="evidence" value="ECO:0007669"/>
    <property type="project" value="UniProtKB-SubCell"/>
</dbReference>
<dbReference type="GO" id="GO:0044423">
    <property type="term" value="C:virion component"/>
    <property type="evidence" value="ECO:0007669"/>
    <property type="project" value="UniProtKB-KW"/>
</dbReference>
<dbReference type="InterPro" id="IPR004848">
    <property type="entry name" value="ASFV_fam_110"/>
</dbReference>
<dbReference type="Pfam" id="PF01639">
    <property type="entry name" value="v110"/>
    <property type="match status" value="1"/>
</dbReference>
<proteinExistence type="inferred from homology"/>
<comment type="function">
    <text evidence="2">Causes the redistribution of lumenal ER protein to an enlarged ERGIC compartment.</text>
</comment>
<comment type="subcellular location">
    <subcellularLocation>
        <location evidence="2">Virion</location>
    </subcellularLocation>
    <subcellularLocation>
        <location evidence="2">Host endoplasmic reticulum-Golgi intermediate compartment</location>
    </subcellularLocation>
</comment>
<comment type="induction">
    <text evidence="4">Expressed in the early phase of the viral replicative cycle.</text>
</comment>
<comment type="similarity">
    <text evidence="4">Belongs to the asfivirus MGF 110 family.</text>
</comment>
<protein>
    <recommendedName>
        <fullName>Protein MGF 110-4L</fullName>
    </recommendedName>
</protein>
<reference key="1">
    <citation type="submission" date="2003-03" db="EMBL/GenBank/DDBJ databases">
        <title>African swine fever virus genomes.</title>
        <authorList>
            <person name="Kutish G.F."/>
            <person name="Rock D.L."/>
        </authorList>
    </citation>
    <scope>NUCLEOTIDE SEQUENCE [LARGE SCALE GENOMIC DNA]</scope>
</reference>
<gene>
    <name type="ordered locus">War-009</name>
</gene>
<name>1104L_ASFWA</name>
<feature type="signal peptide" evidence="1">
    <location>
        <begin position="1"/>
        <end position="29"/>
    </location>
</feature>
<feature type="chain" id="PRO_0000373192" description="Protein MGF 110-4L">
    <location>
        <begin position="30"/>
        <end position="125"/>
    </location>
</feature>
<feature type="short sequence motif" description="Prevents secretion from ER" evidence="2">
    <location>
        <begin position="122"/>
        <end position="125"/>
    </location>
</feature>
<feature type="glycosylation site" description="N-linked (GlcNAc...) asparagine; by host" evidence="3">
    <location>
        <position position="65"/>
    </location>
</feature>
<accession>P0C9H0</accession>
<organism>
    <name type="scientific">African swine fever virus (isolate Warthog/Namibia/Wart80/1980)</name>
    <name type="common">ASFV</name>
    <dbReference type="NCBI Taxonomy" id="561444"/>
    <lineage>
        <taxon>Viruses</taxon>
        <taxon>Varidnaviria</taxon>
        <taxon>Bamfordvirae</taxon>
        <taxon>Nucleocytoviricota</taxon>
        <taxon>Pokkesviricetes</taxon>
        <taxon>Asfuvirales</taxon>
        <taxon>Asfarviridae</taxon>
        <taxon>Asfivirus</taxon>
        <taxon>African swine fever virus</taxon>
    </lineage>
</organism>